<evidence type="ECO:0000255" key="1">
    <source>
        <dbReference type="HAMAP-Rule" id="MF_01338"/>
    </source>
</evidence>
<comment type="function">
    <text evidence="1">RuBisCO catalyzes two reactions: the carboxylation of D-ribulose 1,5-bisphosphate, the primary event in carbon dioxide fixation, as well as the oxidative fragmentation of the pentose substrate in the photorespiration process. Both reactions occur simultaneously and in competition at the same active site.</text>
</comment>
<comment type="catalytic activity">
    <reaction evidence="1">
        <text>2 (2R)-3-phosphoglycerate + 2 H(+) = D-ribulose 1,5-bisphosphate + CO2 + H2O</text>
        <dbReference type="Rhea" id="RHEA:23124"/>
        <dbReference type="ChEBI" id="CHEBI:15377"/>
        <dbReference type="ChEBI" id="CHEBI:15378"/>
        <dbReference type="ChEBI" id="CHEBI:16526"/>
        <dbReference type="ChEBI" id="CHEBI:57870"/>
        <dbReference type="ChEBI" id="CHEBI:58272"/>
        <dbReference type="EC" id="4.1.1.39"/>
    </reaction>
</comment>
<comment type="catalytic activity">
    <reaction evidence="1">
        <text>D-ribulose 1,5-bisphosphate + O2 = 2-phosphoglycolate + (2R)-3-phosphoglycerate + 2 H(+)</text>
        <dbReference type="Rhea" id="RHEA:36631"/>
        <dbReference type="ChEBI" id="CHEBI:15378"/>
        <dbReference type="ChEBI" id="CHEBI:15379"/>
        <dbReference type="ChEBI" id="CHEBI:57870"/>
        <dbReference type="ChEBI" id="CHEBI:58033"/>
        <dbReference type="ChEBI" id="CHEBI:58272"/>
    </reaction>
</comment>
<comment type="cofactor">
    <cofactor evidence="1">
        <name>Mg(2+)</name>
        <dbReference type="ChEBI" id="CHEBI:18420"/>
    </cofactor>
    <text evidence="1">Binds 1 Mg(2+) ion per subunit.</text>
</comment>
<comment type="subunit">
    <text evidence="1">Heterohexadecamer of 8 large chains and 8 small chains; disulfide-linked. The disulfide link is formed within the large subunit homodimers.</text>
</comment>
<comment type="subcellular location">
    <subcellularLocation>
        <location>Plastid</location>
        <location>Chloroplast</location>
    </subcellularLocation>
</comment>
<comment type="PTM">
    <text evidence="1">The disulfide bond which can form in the large chain dimeric partners within the hexadecamer appears to be associated with oxidative stress and protein turnover.</text>
</comment>
<comment type="miscellaneous">
    <text evidence="1">The basic functional RuBisCO is composed of a large chain homodimer in a 'head-to-tail' conformation. In form I RuBisCO this homodimer is arranged in a barrel-like tetramer with the small subunits forming a tetrameric 'cap' on each end of the 'barrel'.</text>
</comment>
<comment type="similarity">
    <text evidence="1">Belongs to the RuBisCO large chain family. Type I subfamily.</text>
</comment>
<geneLocation type="chloroplast"/>
<sequence length="475" mass="52555">MSPQTETKASVGFKAGVKDYKLTYYTPDYETKDTDILAAFRVTPQPGVPPEEAGAAVAAESSTGTWTTVWTDGLTSLDRYKGRCYHIEPVAGEESQFIAYVAYPLDLFEEGSVTNMFTSIVGNVFGFKALRALRLEDLRIPPAYSKTFQGPPHGIQVERDKLNKYGRPLLGCTIKPKLGLSAKNYGRAVYECLRGGLDFTKDDENVNSQPFMRWRDRFLFCAEAIYKAQAETGEIKGHYLNATAGTCEEMIKRAVFARELGVPIVMHDYLTGGFTANTSLAHYCRDNGLLLHIHRAMHAVIDRQKNHGMHFRVLAKALRMSGGDHIHAGTVVGKLEGEREITLGFVDLLRDDYIEKDRSRGIYFTQDWVSLPGVLPVASGGIHVWHMPALTEIFGDDSVLQFGGGTLGHPWGNAPGAVANRVALEACVQARNEGRDLAREGNEIIRAAAKWSPELAAACEVWKEIKFEFPAMDTL</sequence>
<feature type="propeptide" id="PRO_0000031187" evidence="1">
    <location>
        <begin position="1"/>
        <end position="2"/>
    </location>
</feature>
<feature type="chain" id="PRO_0000031188" description="Ribulose bisphosphate carboxylase large chain">
    <location>
        <begin position="3"/>
        <end position="475"/>
    </location>
</feature>
<feature type="active site" description="Proton acceptor" evidence="1">
    <location>
        <position position="175"/>
    </location>
</feature>
<feature type="active site" description="Proton acceptor" evidence="1">
    <location>
        <position position="294"/>
    </location>
</feature>
<feature type="binding site" description="in homodimeric partner" evidence="1">
    <location>
        <position position="123"/>
    </location>
    <ligand>
        <name>substrate</name>
    </ligand>
</feature>
<feature type="binding site" evidence="1">
    <location>
        <position position="173"/>
    </location>
    <ligand>
        <name>substrate</name>
    </ligand>
</feature>
<feature type="binding site" evidence="1">
    <location>
        <position position="177"/>
    </location>
    <ligand>
        <name>substrate</name>
    </ligand>
</feature>
<feature type="binding site" description="via carbamate group" evidence="1">
    <location>
        <position position="201"/>
    </location>
    <ligand>
        <name>Mg(2+)</name>
        <dbReference type="ChEBI" id="CHEBI:18420"/>
    </ligand>
</feature>
<feature type="binding site" evidence="1">
    <location>
        <position position="203"/>
    </location>
    <ligand>
        <name>Mg(2+)</name>
        <dbReference type="ChEBI" id="CHEBI:18420"/>
    </ligand>
</feature>
<feature type="binding site" evidence="1">
    <location>
        <position position="204"/>
    </location>
    <ligand>
        <name>Mg(2+)</name>
        <dbReference type="ChEBI" id="CHEBI:18420"/>
    </ligand>
</feature>
<feature type="binding site" evidence="1">
    <location>
        <position position="295"/>
    </location>
    <ligand>
        <name>substrate</name>
    </ligand>
</feature>
<feature type="binding site" evidence="1">
    <location>
        <position position="327"/>
    </location>
    <ligand>
        <name>substrate</name>
    </ligand>
</feature>
<feature type="binding site" evidence="1">
    <location>
        <position position="379"/>
    </location>
    <ligand>
        <name>substrate</name>
    </ligand>
</feature>
<feature type="site" description="Transition state stabilizer" evidence="1">
    <location>
        <position position="334"/>
    </location>
</feature>
<feature type="modified residue" description="N-acetylproline" evidence="1">
    <location>
        <position position="3"/>
    </location>
</feature>
<feature type="modified residue" description="N6,N6,N6-trimethyllysine" evidence="1">
    <location>
        <position position="14"/>
    </location>
</feature>
<feature type="modified residue" description="N6-carboxylysine" evidence="1">
    <location>
        <position position="201"/>
    </location>
</feature>
<feature type="disulfide bond" description="Interchain; in linked form" evidence="1">
    <location>
        <position position="247"/>
    </location>
</feature>
<reference key="1">
    <citation type="journal article" date="1992" name="Mol. Biol. Evol.">
        <title>Complete congruence between morphological and rbcL-based molecular phylogenies in birches and related species (Betulaceae).</title>
        <authorList>
            <person name="Bousquet J."/>
            <person name="Strauss S.H."/>
            <person name="Li P."/>
        </authorList>
    </citation>
    <scope>NUCLEOTIDE SEQUENCE [GENOMIC DNA]</scope>
    <source>
        <tissue>Leaf</tissue>
    </source>
</reference>
<keyword id="KW-0007">Acetylation</keyword>
<keyword id="KW-0113">Calvin cycle</keyword>
<keyword id="KW-0120">Carbon dioxide fixation</keyword>
<keyword id="KW-0150">Chloroplast</keyword>
<keyword id="KW-1015">Disulfide bond</keyword>
<keyword id="KW-0456">Lyase</keyword>
<keyword id="KW-0460">Magnesium</keyword>
<keyword id="KW-0479">Metal-binding</keyword>
<keyword id="KW-0488">Methylation</keyword>
<keyword id="KW-0503">Monooxygenase</keyword>
<keyword id="KW-0560">Oxidoreductase</keyword>
<keyword id="KW-0601">Photorespiration</keyword>
<keyword id="KW-0602">Photosynthesis</keyword>
<keyword id="KW-0934">Plastid</keyword>
<dbReference type="EC" id="4.1.1.39" evidence="1"/>
<dbReference type="EMBL" id="X56619">
    <property type="protein sequence ID" value="CAA39957.1"/>
    <property type="molecule type" value="Genomic_DNA"/>
</dbReference>
<dbReference type="RefSeq" id="YP_009715206.1">
    <property type="nucleotide sequence ID" value="NC_045292.1"/>
</dbReference>
<dbReference type="SMR" id="Q06024"/>
<dbReference type="GeneID" id="42894707"/>
<dbReference type="GO" id="GO:0009507">
    <property type="term" value="C:chloroplast"/>
    <property type="evidence" value="ECO:0007669"/>
    <property type="project" value="UniProtKB-SubCell"/>
</dbReference>
<dbReference type="GO" id="GO:0000287">
    <property type="term" value="F:magnesium ion binding"/>
    <property type="evidence" value="ECO:0007669"/>
    <property type="project" value="UniProtKB-UniRule"/>
</dbReference>
<dbReference type="GO" id="GO:0004497">
    <property type="term" value="F:monooxygenase activity"/>
    <property type="evidence" value="ECO:0007669"/>
    <property type="project" value="UniProtKB-KW"/>
</dbReference>
<dbReference type="GO" id="GO:0016984">
    <property type="term" value="F:ribulose-bisphosphate carboxylase activity"/>
    <property type="evidence" value="ECO:0007669"/>
    <property type="project" value="UniProtKB-UniRule"/>
</dbReference>
<dbReference type="GO" id="GO:0009853">
    <property type="term" value="P:photorespiration"/>
    <property type="evidence" value="ECO:0007669"/>
    <property type="project" value="UniProtKB-KW"/>
</dbReference>
<dbReference type="GO" id="GO:0019253">
    <property type="term" value="P:reductive pentose-phosphate cycle"/>
    <property type="evidence" value="ECO:0007669"/>
    <property type="project" value="UniProtKB-UniRule"/>
</dbReference>
<dbReference type="CDD" id="cd08212">
    <property type="entry name" value="RuBisCO_large_I"/>
    <property type="match status" value="1"/>
</dbReference>
<dbReference type="FunFam" id="3.20.20.110:FF:000001">
    <property type="entry name" value="Ribulose bisphosphate carboxylase large chain"/>
    <property type="match status" value="1"/>
</dbReference>
<dbReference type="FunFam" id="3.30.70.150:FF:000001">
    <property type="entry name" value="Ribulose bisphosphate carboxylase large chain"/>
    <property type="match status" value="1"/>
</dbReference>
<dbReference type="Gene3D" id="3.20.20.110">
    <property type="entry name" value="Ribulose bisphosphate carboxylase, large subunit, C-terminal domain"/>
    <property type="match status" value="1"/>
</dbReference>
<dbReference type="Gene3D" id="3.30.70.150">
    <property type="entry name" value="RuBisCO large subunit, N-terminal domain"/>
    <property type="match status" value="1"/>
</dbReference>
<dbReference type="HAMAP" id="MF_01338">
    <property type="entry name" value="RuBisCO_L_type1"/>
    <property type="match status" value="1"/>
</dbReference>
<dbReference type="InterPro" id="IPR033966">
    <property type="entry name" value="RuBisCO"/>
</dbReference>
<dbReference type="InterPro" id="IPR020878">
    <property type="entry name" value="RuBisCo_large_chain_AS"/>
</dbReference>
<dbReference type="InterPro" id="IPR000685">
    <property type="entry name" value="RuBisCO_lsu_C"/>
</dbReference>
<dbReference type="InterPro" id="IPR036376">
    <property type="entry name" value="RuBisCO_lsu_C_sf"/>
</dbReference>
<dbReference type="InterPro" id="IPR017443">
    <property type="entry name" value="RuBisCO_lsu_fd_N"/>
</dbReference>
<dbReference type="InterPro" id="IPR036422">
    <property type="entry name" value="RuBisCO_lsu_N_sf"/>
</dbReference>
<dbReference type="InterPro" id="IPR020888">
    <property type="entry name" value="RuBisCO_lsuI"/>
</dbReference>
<dbReference type="NCBIfam" id="NF003252">
    <property type="entry name" value="PRK04208.1"/>
    <property type="match status" value="1"/>
</dbReference>
<dbReference type="PANTHER" id="PTHR42704">
    <property type="entry name" value="RIBULOSE BISPHOSPHATE CARBOXYLASE"/>
    <property type="match status" value="1"/>
</dbReference>
<dbReference type="PANTHER" id="PTHR42704:SF15">
    <property type="entry name" value="RIBULOSE BISPHOSPHATE CARBOXYLASE LARGE CHAIN"/>
    <property type="match status" value="1"/>
</dbReference>
<dbReference type="Pfam" id="PF00016">
    <property type="entry name" value="RuBisCO_large"/>
    <property type="match status" value="1"/>
</dbReference>
<dbReference type="Pfam" id="PF02788">
    <property type="entry name" value="RuBisCO_large_N"/>
    <property type="match status" value="1"/>
</dbReference>
<dbReference type="SFLD" id="SFLDG01052">
    <property type="entry name" value="RuBisCO"/>
    <property type="match status" value="1"/>
</dbReference>
<dbReference type="SFLD" id="SFLDS00014">
    <property type="entry name" value="RuBisCO"/>
    <property type="match status" value="1"/>
</dbReference>
<dbReference type="SFLD" id="SFLDG00301">
    <property type="entry name" value="RuBisCO-like_proteins"/>
    <property type="match status" value="1"/>
</dbReference>
<dbReference type="SUPFAM" id="SSF51649">
    <property type="entry name" value="RuBisCo, C-terminal domain"/>
    <property type="match status" value="1"/>
</dbReference>
<dbReference type="SUPFAM" id="SSF54966">
    <property type="entry name" value="RuBisCO, large subunit, small (N-terminal) domain"/>
    <property type="match status" value="1"/>
</dbReference>
<dbReference type="PROSITE" id="PS00157">
    <property type="entry name" value="RUBISCO_LARGE"/>
    <property type="match status" value="1"/>
</dbReference>
<organism>
    <name type="scientific">Corylus cornuta</name>
    <name type="common">Beaked hazel</name>
    <name type="synonym">Corylus rostrata</name>
    <dbReference type="NCBI Taxonomy" id="13452"/>
    <lineage>
        <taxon>Eukaryota</taxon>
        <taxon>Viridiplantae</taxon>
        <taxon>Streptophyta</taxon>
        <taxon>Embryophyta</taxon>
        <taxon>Tracheophyta</taxon>
        <taxon>Spermatophyta</taxon>
        <taxon>Magnoliopsida</taxon>
        <taxon>eudicotyledons</taxon>
        <taxon>Gunneridae</taxon>
        <taxon>Pentapetalae</taxon>
        <taxon>rosids</taxon>
        <taxon>fabids</taxon>
        <taxon>Fagales</taxon>
        <taxon>Betulaceae</taxon>
        <taxon>Corylus</taxon>
    </lineage>
</organism>
<name>RBL_CORCO</name>
<proteinExistence type="inferred from homology"/>
<gene>
    <name evidence="1" type="primary">rbcL</name>
</gene>
<protein>
    <recommendedName>
        <fullName evidence="1">Ribulose bisphosphate carboxylase large chain</fullName>
        <shortName evidence="1">RuBisCO large subunit</shortName>
        <ecNumber evidence="1">4.1.1.39</ecNumber>
    </recommendedName>
</protein>
<accession>Q06024</accession>